<accession>B2LT61</accession>
<gene>
    <name type="primary">TLR2</name>
</gene>
<sequence length="784" mass="90033">MPRALWTAWVWAXIILSTEGASDQASSLSCDSTGVCDGHSRSLNSIPSGLTAGVKSLDLSNNEITYVGNRDLQRCVNLKTLRLGANEIHTVEEDSFFHLRNLEYLDLSYNRLSNLSSSWFRSLYVLKFLNLLGNLYKTLGETSLFSHLPNLXTLKVGNSNSFTEIHEKDFTGLTFLEELEISAQNLQIYVPKSLKSIQNISHLILHLKQPVLLVDILVDIVSSLDCLELRDTNLHTFHFSEASISEMSTSVKKLIFRNVQFTDESFVEVVKLFNYVSGILEVEFDDCTHDGIGDFRALSLDRIRHLGNVETLTIRKLHIPQFFLFHDLSSIYPLTGKVKRVTIENSKVFLVPCLLSQHLKSLEYLDLSENLMSEETLKNSACKDAWPFLQTLVLRQNRLKSLEKTGELLLTLENLNSLDISKNNFLSMPETCQWPGKMKQLNLSSTRIHSLTQCLPQTLEILDVSNNNLDSFSLILPQLKELYISRNKLKTLPDASFLPVLSVMRISRNIINTFSKEQLDSFQQLKTLEAGGNNFICSCDFLSFTQGQQALGRVLVDWPDDYRCDSPSHVRGQRVQDARLSLSECHRAAVVSAACCALFLVLLLTGVLCHRFHGLWYMKMMWAWLQAKRKPRKAPRRDICYDAFVSYSERDSYWVENLMVQELEQFNPPFKLCLHKRDFIPGKWIIDNIIDSIEKSHKTIFVLSENFVXSEWCKYELDFSHFRLFDENNDAAILILLEPIDKKAIPQRFCKLRKIMNTKTYLEWPVDETQQEGFWLNLRAAIRS</sequence>
<comment type="function">
    <text evidence="3 4">Cooperates with LY96 to mediate the innate immune response to bacterial lipoproteins and other microbial cell wall components. Cooperates with TLR1 or TLR6 to mediate the innate immune response to bacterial lipoproteins or lipopeptides. Acts via MYD88 and TRAF6, leading to NF-kappa-B activation, cytokine secretion and the inflammatory response (By similarity). May also promote apoptosis in response to lipoproteins. Forms activation clusters composed of several receptors depending on the ligand, these clusters trigger signaling from the cell surface and subsequently are targeted to the Golgi in a lipid-raft dependent pathway. Forms the cluster TLR2:TLR6:CD14:CD36 in response to diacylated lipopeptides and TLR2:TLR1:CD14 in response to triacylated lipopeptides (By similarity).</text>
</comment>
<comment type="subunit">
    <text evidence="3 4">Interacts with LY96, TLR1 and TLR6 (via extracellular domain). TLR2 seems to exist in heterodimers with either TLR1 or TLR6 before stimulation by the ligand. The heterodimers form bigger oligomers in response to their corresponding ligands as well as further heterotypic associations with other receptors such as CD14 and/or CD36. Binds MYD88 (via TIR domain). Interacts with TICAM1. Interacts with CNPY3. Interacts with ATG16L1. Interacts with PPP1R11. Interacts with TICAM2. Interacts with TIRAP (By similarity).</text>
</comment>
<comment type="subcellular location">
    <subcellularLocation>
        <location evidence="4">Membrane</location>
        <topology evidence="5">Single-pass type I membrane protein</topology>
    </subcellularLocation>
    <subcellularLocation>
        <location evidence="4">Cytoplasmic vesicle</location>
        <location evidence="4">Phagosome membrane</location>
        <topology evidence="5">Single-pass type I membrane protein</topology>
    </subcellularLocation>
    <subcellularLocation>
        <location evidence="3">Membrane raft</location>
    </subcellularLocation>
    <text evidence="3">Does not reside in lipid rafts before stimulation but accumulates increasingly in the raft upon the presence of the microbial ligand. In response to diacylated lipoproteins, TLR2:TLR6 heterodimers are recruited in lipid rafts, this recruitment determine the intracellular targeting to the Golgi apparatus. Triacylated lipoproteins induce the same mechanism for TLR2:TLR1 heterodimers.</text>
</comment>
<comment type="domain">
    <text evidence="1">Ester-bound lipid substrates are bound through a crevice formed between the LRR 11 and LRR 12.</text>
</comment>
<comment type="domain">
    <text evidence="1">The ATG16L1-binding motif mediates interaction with ATG16L1.</text>
</comment>
<comment type="PTM">
    <text evidence="4">Ubiquitinated at Lys-754 by PPP1R11, leading to its degradation. Deubiquitinated by USP2.</text>
</comment>
<comment type="PTM">
    <text evidence="3">Glycosylation of Asn-442 is critical for secretion of the N-terminal ectodomain of TLR2.</text>
</comment>
<comment type="similarity">
    <text evidence="7">Belongs to the Toll-like receptor family.</text>
</comment>
<comment type="caution">
    <text evidence="2 7">In some plant proteins and in human SARM1, the TIR domain has NAD(+) hydrolase (NADase) activity (By similarity). However, despite the presence of the catalytic Asp residue, the isolated TIR domain of human TLR4 lacks NADase activity (By similarity). Based on this, it is unlikely that Toll-like receptors have NADase activity.</text>
</comment>
<dbReference type="EMBL" id="EU580539">
    <property type="protein sequence ID" value="ACB72728.1"/>
    <property type="molecule type" value="Genomic_DNA"/>
</dbReference>
<dbReference type="GlyCosmos" id="B2LT61">
    <property type="glycosylation" value="3 sites, No reported glycans"/>
</dbReference>
<dbReference type="GO" id="GO:0005794">
    <property type="term" value="C:Golgi apparatus"/>
    <property type="evidence" value="ECO:0000250"/>
    <property type="project" value="UniProtKB"/>
</dbReference>
<dbReference type="GO" id="GO:0045121">
    <property type="term" value="C:membrane raft"/>
    <property type="evidence" value="ECO:0000250"/>
    <property type="project" value="UniProtKB"/>
</dbReference>
<dbReference type="GO" id="GO:0030670">
    <property type="term" value="C:phagocytic vesicle membrane"/>
    <property type="evidence" value="ECO:0007669"/>
    <property type="project" value="UniProtKB-SubCell"/>
</dbReference>
<dbReference type="GO" id="GO:0005886">
    <property type="term" value="C:plasma membrane"/>
    <property type="evidence" value="ECO:0007669"/>
    <property type="project" value="TreeGrafter"/>
</dbReference>
<dbReference type="GO" id="GO:0043235">
    <property type="term" value="C:receptor complex"/>
    <property type="evidence" value="ECO:0007669"/>
    <property type="project" value="TreeGrafter"/>
</dbReference>
<dbReference type="GO" id="GO:0061809">
    <property type="term" value="F:NAD+ nucleosidase activity, cyclic ADP-ribose generating"/>
    <property type="evidence" value="ECO:0007669"/>
    <property type="project" value="UniProtKB-EC"/>
</dbReference>
<dbReference type="GO" id="GO:0004888">
    <property type="term" value="F:transmembrane signaling receptor activity"/>
    <property type="evidence" value="ECO:0007669"/>
    <property type="project" value="InterPro"/>
</dbReference>
<dbReference type="GO" id="GO:0042497">
    <property type="term" value="F:triacyl lipopeptide binding"/>
    <property type="evidence" value="ECO:0007669"/>
    <property type="project" value="TreeGrafter"/>
</dbReference>
<dbReference type="GO" id="GO:0071726">
    <property type="term" value="P:cellular response to diacyl bacterial lipopeptide"/>
    <property type="evidence" value="ECO:0000250"/>
    <property type="project" value="UniProtKB"/>
</dbReference>
<dbReference type="GO" id="GO:0071727">
    <property type="term" value="P:cellular response to triacyl bacterial lipopeptide"/>
    <property type="evidence" value="ECO:0000250"/>
    <property type="project" value="UniProtKB"/>
</dbReference>
<dbReference type="GO" id="GO:0006954">
    <property type="term" value="P:inflammatory response"/>
    <property type="evidence" value="ECO:0007669"/>
    <property type="project" value="UniProtKB-KW"/>
</dbReference>
<dbReference type="GO" id="GO:0045087">
    <property type="term" value="P:innate immune response"/>
    <property type="evidence" value="ECO:0007669"/>
    <property type="project" value="UniProtKB-KW"/>
</dbReference>
<dbReference type="GO" id="GO:0002224">
    <property type="term" value="P:toll-like receptor signaling pathway"/>
    <property type="evidence" value="ECO:0007669"/>
    <property type="project" value="InterPro"/>
</dbReference>
<dbReference type="FunFam" id="3.40.50.10140:FF:000001">
    <property type="entry name" value="Toll-like receptor 2"/>
    <property type="match status" value="1"/>
</dbReference>
<dbReference type="FunFam" id="3.80.10.10:FF:000046">
    <property type="entry name" value="Toll-like receptor 2"/>
    <property type="match status" value="1"/>
</dbReference>
<dbReference type="Gene3D" id="3.80.10.10">
    <property type="entry name" value="Ribonuclease Inhibitor"/>
    <property type="match status" value="1"/>
</dbReference>
<dbReference type="Gene3D" id="3.40.50.10140">
    <property type="entry name" value="Toll/interleukin-1 receptor homology (TIR) domain"/>
    <property type="match status" value="1"/>
</dbReference>
<dbReference type="InterPro" id="IPR000483">
    <property type="entry name" value="Cys-rich_flank_reg_C"/>
</dbReference>
<dbReference type="InterPro" id="IPR001611">
    <property type="entry name" value="Leu-rich_rpt"/>
</dbReference>
<dbReference type="InterPro" id="IPR003591">
    <property type="entry name" value="Leu-rich_rpt_typical-subtyp"/>
</dbReference>
<dbReference type="InterPro" id="IPR032675">
    <property type="entry name" value="LRR_dom_sf"/>
</dbReference>
<dbReference type="InterPro" id="IPR000157">
    <property type="entry name" value="TIR_dom"/>
</dbReference>
<dbReference type="InterPro" id="IPR017241">
    <property type="entry name" value="Toll-like_receptor"/>
</dbReference>
<dbReference type="InterPro" id="IPR035897">
    <property type="entry name" value="Toll_tir_struct_dom_sf"/>
</dbReference>
<dbReference type="PANTHER" id="PTHR24365">
    <property type="entry name" value="TOLL-LIKE RECEPTOR"/>
    <property type="match status" value="1"/>
</dbReference>
<dbReference type="PANTHER" id="PTHR24365:SF17">
    <property type="entry name" value="TOLL-LIKE RECEPTOR 2"/>
    <property type="match status" value="1"/>
</dbReference>
<dbReference type="Pfam" id="PF13855">
    <property type="entry name" value="LRR_8"/>
    <property type="match status" value="2"/>
</dbReference>
<dbReference type="Pfam" id="PF01582">
    <property type="entry name" value="TIR"/>
    <property type="match status" value="1"/>
</dbReference>
<dbReference type="PIRSF" id="PIRSF037595">
    <property type="entry name" value="Toll-like_receptor"/>
    <property type="match status" value="1"/>
</dbReference>
<dbReference type="PRINTS" id="PR01537">
    <property type="entry name" value="INTRLKN1R1F"/>
</dbReference>
<dbReference type="PRINTS" id="PR00019">
    <property type="entry name" value="LEURICHRPT"/>
</dbReference>
<dbReference type="SMART" id="SM00364">
    <property type="entry name" value="LRR_BAC"/>
    <property type="match status" value="5"/>
</dbReference>
<dbReference type="SMART" id="SM00365">
    <property type="entry name" value="LRR_SD22"/>
    <property type="match status" value="6"/>
</dbReference>
<dbReference type="SMART" id="SM00369">
    <property type="entry name" value="LRR_TYP"/>
    <property type="match status" value="6"/>
</dbReference>
<dbReference type="SMART" id="SM00082">
    <property type="entry name" value="LRRCT"/>
    <property type="match status" value="1"/>
</dbReference>
<dbReference type="SMART" id="SM00255">
    <property type="entry name" value="TIR"/>
    <property type="match status" value="1"/>
</dbReference>
<dbReference type="SUPFAM" id="SSF52058">
    <property type="entry name" value="L domain-like"/>
    <property type="match status" value="1"/>
</dbReference>
<dbReference type="SUPFAM" id="SSF52200">
    <property type="entry name" value="Toll/Interleukin receptor TIR domain"/>
    <property type="match status" value="1"/>
</dbReference>
<dbReference type="PROSITE" id="PS51450">
    <property type="entry name" value="LRR"/>
    <property type="match status" value="10"/>
</dbReference>
<dbReference type="PROSITE" id="PS50104">
    <property type="entry name" value="TIR"/>
    <property type="match status" value="1"/>
</dbReference>
<proteinExistence type="inferred from homology"/>
<protein>
    <recommendedName>
        <fullName>Toll-like receptor 2</fullName>
    </recommendedName>
    <cdAntigenName>CD282</cdAntigenName>
</protein>
<name>TLR2_BISBI</name>
<keyword id="KW-0968">Cytoplasmic vesicle</keyword>
<keyword id="KW-1015">Disulfide bond</keyword>
<keyword id="KW-0325">Glycoprotein</keyword>
<keyword id="KW-0391">Immunity</keyword>
<keyword id="KW-0395">Inflammatory response</keyword>
<keyword id="KW-0399">Innate immunity</keyword>
<keyword id="KW-1017">Isopeptide bond</keyword>
<keyword id="KW-0433">Leucine-rich repeat</keyword>
<keyword id="KW-0472">Membrane</keyword>
<keyword id="KW-0520">NAD</keyword>
<keyword id="KW-0675">Receptor</keyword>
<keyword id="KW-0677">Repeat</keyword>
<keyword id="KW-0732">Signal</keyword>
<keyword id="KW-0812">Transmembrane</keyword>
<keyword id="KW-1133">Transmembrane helix</keyword>
<keyword id="KW-0832">Ubl conjugation</keyword>
<organism>
    <name type="scientific">Bison bison</name>
    <name type="common">American bison</name>
    <name type="synonym">Bos bison</name>
    <dbReference type="NCBI Taxonomy" id="9901"/>
    <lineage>
        <taxon>Eukaryota</taxon>
        <taxon>Metazoa</taxon>
        <taxon>Chordata</taxon>
        <taxon>Craniata</taxon>
        <taxon>Vertebrata</taxon>
        <taxon>Euteleostomi</taxon>
        <taxon>Mammalia</taxon>
        <taxon>Eutheria</taxon>
        <taxon>Laurasiatheria</taxon>
        <taxon>Artiodactyla</taxon>
        <taxon>Ruminantia</taxon>
        <taxon>Pecora</taxon>
        <taxon>Bovidae</taxon>
        <taxon>Bovinae</taxon>
        <taxon>Bison</taxon>
    </lineage>
</organism>
<feature type="signal peptide" evidence="5">
    <location>
        <begin position="1"/>
        <end position="20"/>
    </location>
</feature>
<feature type="chain" id="PRO_0000363768" description="Toll-like receptor 2">
    <location>
        <begin position="21"/>
        <end position="784"/>
    </location>
</feature>
<feature type="topological domain" description="Extracellular" evidence="5">
    <location>
        <begin position="21"/>
        <end position="587"/>
    </location>
</feature>
<feature type="transmembrane region" description="Helical" evidence="5">
    <location>
        <begin position="588"/>
        <end position="608"/>
    </location>
</feature>
<feature type="topological domain" description="Cytoplasmic" evidence="5">
    <location>
        <begin position="609"/>
        <end position="784"/>
    </location>
</feature>
<feature type="repeat" description="LRR 1">
    <location>
        <begin position="54"/>
        <end position="77"/>
    </location>
</feature>
<feature type="repeat" description="LRR 2">
    <location>
        <begin position="78"/>
        <end position="101"/>
    </location>
</feature>
<feature type="repeat" description="LRR 3">
    <location>
        <begin position="102"/>
        <end position="125"/>
    </location>
</feature>
<feature type="repeat" description="LRR 4">
    <location>
        <begin position="126"/>
        <end position="150"/>
    </location>
</feature>
<feature type="repeat" description="LRR 5">
    <location>
        <begin position="151"/>
        <end position="175"/>
    </location>
</feature>
<feature type="repeat" description="LRR 6">
    <location>
        <begin position="176"/>
        <end position="199"/>
    </location>
</feature>
<feature type="repeat" description="LRR 7">
    <location>
        <begin position="200"/>
        <end position="223"/>
    </location>
</feature>
<feature type="repeat" description="LRR 8">
    <location>
        <begin position="224"/>
        <end position="250"/>
    </location>
</feature>
<feature type="repeat" description="LRR 9">
    <location>
        <begin position="251"/>
        <end position="278"/>
    </location>
</feature>
<feature type="repeat" description="LRR 10">
    <location>
        <begin position="279"/>
        <end position="308"/>
    </location>
</feature>
<feature type="repeat" description="LRR 11">
    <location>
        <begin position="309"/>
        <end position="337"/>
    </location>
</feature>
<feature type="repeat" description="LRR 12">
    <location>
        <begin position="338"/>
        <end position="361"/>
    </location>
</feature>
<feature type="repeat" description="LRR 13">
    <location>
        <begin position="362"/>
        <end position="388"/>
    </location>
</feature>
<feature type="repeat" description="LRR 14">
    <location>
        <begin position="389"/>
        <end position="414"/>
    </location>
</feature>
<feature type="repeat" description="LRR 15">
    <location>
        <begin position="415"/>
        <end position="437"/>
    </location>
</feature>
<feature type="repeat" description="LRR 16">
    <location>
        <begin position="438"/>
        <end position="457"/>
    </location>
</feature>
<feature type="repeat" description="LRR 17">
    <location>
        <begin position="458"/>
        <end position="478"/>
    </location>
</feature>
<feature type="repeat" description="LRR 18">
    <location>
        <begin position="479"/>
        <end position="500"/>
    </location>
</feature>
<feature type="repeat" description="LRR 19">
    <location>
        <begin position="501"/>
        <end position="524"/>
    </location>
</feature>
<feature type="domain" description="LRRCT">
    <location>
        <begin position="525"/>
        <end position="579"/>
    </location>
</feature>
<feature type="domain" description="TIR" evidence="6">
    <location>
        <begin position="639"/>
        <end position="782"/>
    </location>
</feature>
<feature type="short sequence motif" description="ATG16L1-binding motif">
    <location>
        <begin position="761"/>
        <end position="778"/>
    </location>
</feature>
<feature type="site" description="Interaction with bacterial lipopeptide" evidence="1">
    <location>
        <position position="349"/>
    </location>
</feature>
<feature type="glycosylation site" description="N-linked (GlcNAc...) asparagine" evidence="5">
    <location>
        <position position="114"/>
    </location>
</feature>
<feature type="glycosylation site" description="N-linked (GlcNAc...) asparagine" evidence="5">
    <location>
        <position position="199"/>
    </location>
</feature>
<feature type="glycosylation site" description="N-linked (GlcNAc...) asparagine" evidence="5">
    <location>
        <position position="442"/>
    </location>
</feature>
<feature type="disulfide bond" evidence="1">
    <location>
        <begin position="30"/>
        <end position="36"/>
    </location>
</feature>
<feature type="disulfide bond" evidence="1">
    <location>
        <begin position="353"/>
        <end position="382"/>
    </location>
</feature>
<feature type="disulfide bond" evidence="1">
    <location>
        <begin position="432"/>
        <end position="454"/>
    </location>
</feature>
<feature type="cross-link" description="Glycyl lysine isopeptide (Lys-Gly) (interchain with G-Cter in ubiquitin)" evidence="3">
    <location>
        <position position="754"/>
    </location>
</feature>
<evidence type="ECO:0000250" key="1"/>
<evidence type="ECO:0000250" key="2">
    <source>
        <dbReference type="UniProtKB" id="O00206"/>
    </source>
</evidence>
<evidence type="ECO:0000250" key="3">
    <source>
        <dbReference type="UniProtKB" id="O60603"/>
    </source>
</evidence>
<evidence type="ECO:0000250" key="4">
    <source>
        <dbReference type="UniProtKB" id="Q9QUN7"/>
    </source>
</evidence>
<evidence type="ECO:0000255" key="5"/>
<evidence type="ECO:0000255" key="6">
    <source>
        <dbReference type="PROSITE-ProRule" id="PRU00204"/>
    </source>
</evidence>
<evidence type="ECO:0000305" key="7"/>
<reference key="1">
    <citation type="journal article" date="2008" name="BMC Evol. Biol.">
        <title>Molecular evolution of bovine Toll-like receptor 2 suggests substitutions of functional relevance.</title>
        <authorList>
            <person name="Jann O.C."/>
            <person name="Werling D."/>
            <person name="Chang J.S."/>
            <person name="Haig D."/>
            <person name="Glass E.J."/>
        </authorList>
    </citation>
    <scope>NUCLEOTIDE SEQUENCE [GENOMIC DNA]</scope>
</reference>